<name>CFA54_HUMAN</name>
<evidence type="ECO:0000250" key="1">
    <source>
        <dbReference type="UniProtKB" id="A8J666"/>
    </source>
</evidence>
<evidence type="ECO:0000250" key="2">
    <source>
        <dbReference type="UniProtKB" id="Q8C6S9"/>
    </source>
</evidence>
<evidence type="ECO:0000256" key="3">
    <source>
        <dbReference type="SAM" id="MobiDB-lite"/>
    </source>
</evidence>
<evidence type="ECO:0000305" key="4"/>
<evidence type="ECO:0000312" key="5">
    <source>
        <dbReference type="HGNC" id="HGNC:26456"/>
    </source>
</evidence>
<dbReference type="EMBL" id="AC007513">
    <property type="status" value="NOT_ANNOTATED_CDS"/>
    <property type="molecule type" value="Genomic_DNA"/>
</dbReference>
<dbReference type="EMBL" id="AC007564">
    <property type="status" value="NOT_ANNOTATED_CDS"/>
    <property type="molecule type" value="Genomic_DNA"/>
</dbReference>
<dbReference type="EMBL" id="AC008118">
    <property type="status" value="NOT_ANNOTATED_CDS"/>
    <property type="molecule type" value="Genomic_DNA"/>
</dbReference>
<dbReference type="EMBL" id="AK056076">
    <property type="protein sequence ID" value="BAB71089.1"/>
    <property type="molecule type" value="mRNA"/>
</dbReference>
<dbReference type="EMBL" id="AK126100">
    <property type="protein sequence ID" value="BAC86439.1"/>
    <property type="status" value="ALT_INIT"/>
    <property type="molecule type" value="mRNA"/>
</dbReference>
<dbReference type="CCDS" id="CCDS76588.1">
    <molecule id="Q96N23-1"/>
</dbReference>
<dbReference type="RefSeq" id="NP_001293013.1">
    <molecule id="Q96N23-1"/>
    <property type="nucleotide sequence ID" value="NM_001306084.2"/>
</dbReference>
<dbReference type="SMR" id="Q96N23"/>
<dbReference type="FunCoup" id="Q96N23">
    <property type="interactions" value="41"/>
</dbReference>
<dbReference type="IntAct" id="Q96N23">
    <property type="interactions" value="7"/>
</dbReference>
<dbReference type="STRING" id="9606.ENSP00000431759"/>
<dbReference type="iPTMnet" id="Q96N23"/>
<dbReference type="PhosphoSitePlus" id="Q96N23"/>
<dbReference type="SwissPalm" id="Q96N23"/>
<dbReference type="BioMuta" id="CFAP54"/>
<dbReference type="DMDM" id="296434452"/>
<dbReference type="jPOST" id="Q96N23"/>
<dbReference type="MassIVE" id="Q96N23"/>
<dbReference type="PaxDb" id="9606-ENSP00000431759"/>
<dbReference type="PeptideAtlas" id="Q96N23"/>
<dbReference type="ProteomicsDB" id="21180"/>
<dbReference type="ProteomicsDB" id="68299"/>
<dbReference type="ProteomicsDB" id="77458">
    <molecule id="Q96N23-1"/>
</dbReference>
<dbReference type="Antibodypedia" id="50190">
    <property type="antibodies" value="6 antibodies from 5 providers"/>
</dbReference>
<dbReference type="Ensembl" id="ENST00000524981.9">
    <molecule id="Q96N23-1"/>
    <property type="protein sequence ID" value="ENSP00000431759.5"/>
    <property type="gene ID" value="ENSG00000188596.11"/>
</dbReference>
<dbReference type="GeneID" id="144535"/>
<dbReference type="KEGG" id="hsa:144535"/>
<dbReference type="MANE-Select" id="ENST00000524981.9">
    <property type="protein sequence ID" value="ENSP00000431759.5"/>
    <property type="RefSeq nucleotide sequence ID" value="NM_001306084.2"/>
    <property type="RefSeq protein sequence ID" value="NP_001293013.1"/>
</dbReference>
<dbReference type="UCSC" id="uc058sav.1">
    <property type="organism name" value="human"/>
</dbReference>
<dbReference type="AGR" id="HGNC:26456"/>
<dbReference type="CTD" id="144535"/>
<dbReference type="DisGeNET" id="144535"/>
<dbReference type="GeneCards" id="CFAP54"/>
<dbReference type="HGNC" id="HGNC:26456">
    <property type="gene designation" value="CFAP54"/>
</dbReference>
<dbReference type="HPA" id="ENSG00000188596">
    <property type="expression patterns" value="Tissue enhanced (choroid plexus, retina)"/>
</dbReference>
<dbReference type="neXtProt" id="NX_Q96N23"/>
<dbReference type="OpenTargets" id="ENSG00000188596"/>
<dbReference type="VEuPathDB" id="HostDB:ENSG00000188596"/>
<dbReference type="eggNOG" id="ENOG502QVDY">
    <property type="taxonomic scope" value="Eukaryota"/>
</dbReference>
<dbReference type="GeneTree" id="ENSGT00940000162446"/>
<dbReference type="HOGENOM" id="CLU_000333_0_0_1"/>
<dbReference type="InParanoid" id="Q96N23"/>
<dbReference type="OMA" id="FTELNIM"/>
<dbReference type="OrthoDB" id="2104158at2759"/>
<dbReference type="PAN-GO" id="Q96N23">
    <property type="GO annotations" value="1 GO annotation based on evolutionary models"/>
</dbReference>
<dbReference type="PhylomeDB" id="Q96N23"/>
<dbReference type="TreeFam" id="TF328826"/>
<dbReference type="PathwayCommons" id="Q96N23"/>
<dbReference type="SignaLink" id="Q96N23"/>
<dbReference type="BioGRID-ORCS" id="144535">
    <property type="hits" value="5 hits in 179 CRISPR screens"/>
</dbReference>
<dbReference type="ChiTaRS" id="CFAP54">
    <property type="organism name" value="human"/>
</dbReference>
<dbReference type="GenomeRNAi" id="144535"/>
<dbReference type="Pharos" id="Q96N23">
    <property type="development level" value="Tdark"/>
</dbReference>
<dbReference type="PRO" id="PR:Q96N23"/>
<dbReference type="Proteomes" id="UP000005640">
    <property type="component" value="Chromosome 12"/>
</dbReference>
<dbReference type="RNAct" id="Q96N23">
    <property type="molecule type" value="protein"/>
</dbReference>
<dbReference type="Bgee" id="ENSG00000188596">
    <property type="expression patterns" value="Expressed in male germ line stem cell (sensu Vertebrata) in testis and 108 other cell types or tissues"/>
</dbReference>
<dbReference type="ExpressionAtlas" id="Q96N23">
    <property type="expression patterns" value="baseline and differential"/>
</dbReference>
<dbReference type="GO" id="GO:0005930">
    <property type="term" value="C:axoneme"/>
    <property type="evidence" value="ECO:0000250"/>
    <property type="project" value="UniProtKB"/>
</dbReference>
<dbReference type="GO" id="GO:0005576">
    <property type="term" value="C:extracellular region"/>
    <property type="evidence" value="ECO:0007669"/>
    <property type="project" value="GOC"/>
</dbReference>
<dbReference type="GO" id="GO:0090660">
    <property type="term" value="P:cerebrospinal fluid circulation"/>
    <property type="evidence" value="ECO:0007669"/>
    <property type="project" value="Ensembl"/>
</dbReference>
<dbReference type="GO" id="GO:0060271">
    <property type="term" value="P:cilium assembly"/>
    <property type="evidence" value="ECO:0000250"/>
    <property type="project" value="UniProtKB"/>
</dbReference>
<dbReference type="GO" id="GO:0060294">
    <property type="term" value="P:cilium movement involved in cell motility"/>
    <property type="evidence" value="ECO:0000250"/>
    <property type="project" value="UniProtKB"/>
</dbReference>
<dbReference type="GO" id="GO:0051649">
    <property type="term" value="P:establishment of localization in cell"/>
    <property type="evidence" value="ECO:0007669"/>
    <property type="project" value="Ensembl"/>
</dbReference>
<dbReference type="GO" id="GO:0120197">
    <property type="term" value="P:mucociliary clearance"/>
    <property type="evidence" value="ECO:0007669"/>
    <property type="project" value="Ensembl"/>
</dbReference>
<dbReference type="GO" id="GO:0120316">
    <property type="term" value="P:sperm flagellum assembly"/>
    <property type="evidence" value="ECO:0007669"/>
    <property type="project" value="Ensembl"/>
</dbReference>
<dbReference type="GO" id="GO:0007283">
    <property type="term" value="P:spermatogenesis"/>
    <property type="evidence" value="ECO:0000250"/>
    <property type="project" value="UniProtKB"/>
</dbReference>
<dbReference type="InterPro" id="IPR027912">
    <property type="entry name" value="CFAP54"/>
</dbReference>
<dbReference type="PANTHER" id="PTHR33487">
    <property type="entry name" value="CILIA- AND FLAGELLA-ASSOCIATED PROTEIN 54"/>
    <property type="match status" value="1"/>
</dbReference>
<dbReference type="PANTHER" id="PTHR33487:SF1">
    <property type="entry name" value="CILIA- AND FLAGELLA-ASSOCIATED PROTEIN 54"/>
    <property type="match status" value="1"/>
</dbReference>
<dbReference type="Pfam" id="PF14858">
    <property type="entry name" value="CFAP54_N"/>
    <property type="match status" value="1"/>
</dbReference>
<sequence length="3096" mass="351970">MAAQGSPSSSPSDDSTTSGSLPELPPTSTATSRSPPESKGSSRSSLLQWTCPEDSLPLAVFYGPLDAKNPLLASCEKEIQELLGFMRKKKALATTEEEKHEFRRRCATSLFNIWTKYAPRLPADYYNEKLLKVGDSLCQMKEYKLALLQCYGRYLQQFNTNFDENKVDVTQFKATFFPKGFKDKTAGLTFHALSGKNMCNYQLVCDSDENLKNKESVVQCLHILSSLRLIMQVALPQEHLCWIIFNGTIYIYTICRKLMVIGQSSKALEYLLWASMCMESLVPLLSLRYLTWRATLYTAVCQCCYDCHAGIHGEAFARRALAKIDELRQLELMSSSKSQEESRRYFREATMKMAVMIFKRGVFESRRKNKAVFRPKIRINLREVQTLSWPRTVTERLLDEMFDSTASQFLAVLEALSDSNRRILQTGPIVTDEVEIHDVVSELFMAGKELLIMSNIGADGMLDFPKTSLLELMIGRKDVISVDAAVKFIKLAFTYEEWSLFESSAVHLIYFLQRQDDPESKKAEKDLTLLIAMEPLINVKRNKGLIFPLENYKEGQSTQIYLKKIAVHDTCLKTCGYSEDIFHLAATLYVCVCTAPQDVQPDKEIVVDTIMFLWQKCKLGIQRLNISRNDYAKFTQKISTNKWIYLLWQINEVIHCYKMEDIDIVVVAEVTLRLSEILESLGSPGRKFKQSLDVPLREGTNKFPGAPKGITEILPILQKNPVEQLLFAYKLLDRAIGGINLNCMLTSLPNGSSVIDHCYAKRTHHIDGDTYKPLASNSFMMDLHLELIQAQHRIAVVLLDKLQVLQTPTVSKDISTKGPEKLKQSGSTDCFTELNIMNKIKKNTLSKAIYLMQKALLIFEKDATSTSSWELLMEAYSLIQRIEAEQNALYSYQKYLESSKRKKSRVPPPPILLSRTHCSVTLKPAPFTSEVKVSWYCILGCKAEGSYGKVRLNNNHLPNSGEAIPADGKSVFEVKGLETNEKYVFAVAAYSNNGKLVGGAIGETTKPILVYPPLSTITARMFLTQVAYQVGNYELAKKVFSPVWDYFVASPLQDEQSVICLSNIITITQRRLHSDILAETSSILLYLFLRNIFVTSDIKIKEENLFCDNIKGNEIFPSQQIARLIECERVLVALELSNFLNDSSYALQAVTQCYGLLAPIIYHNIVLVPVVQILIKCIVVLQGLPSIVCSKKHTASFESIQHMIACCIFYITKILRSWREYDLAVMIINYGKKMLDITPGCKSLFDGSNEQEEMPEEDSSKKSLKTKKPQQILLPEKINEQLALLETHLLKLTKQYVTSELSGGEDPIFLYPVVLNWSVKGAVKEVMKFKQKPRFLEFFTQVMLKCMNEEKFHLMVEVTTPVHDFLKRRNESLLGLIKVKYKDSALNKKANKSLKFKAAVMEIGRSAEMQQRIRSKKKETLRDFIFKNPAISEMVAHERNRRTSVRKAAQRYLMDYLNPLILSYVKRKRFHRLSLEEMPWRAQMNLYLAGAHFNLVLQKLWECTKMKFGTSHMMVSFRSCDPNMFSLYNSGTVLPTRKLTVENYKAMLDFLLTAKKRKANLPSDAEEFSTFINSIMSDENMSKTQTVYDSDSQSGSSAKEKDRGANLCVMDHFMKIFLYCRRAMVLAHRGGYWTLLQNCCRALWNFTQELQILLKQAVDLDKTFPISQDGFLCTSVLPFYLGAELLIDMLIQLQNTSSIKPIEDKGEFSVPSCYGNIKNDNGGSSLTFEHPLDDVNVVDLKWIHDFVLKSLEVLYQVEKWETLVSLAIQFNTVSHERYTEQVTPLLVYAQRQLLLRIQKFKGPDITQQPCARYEAEYGEKITCRNFIGKQLKINSSTIEATSNCTDLLKMLISSEYSRAKALVCVPVDVTDTLRCFRETLEKSKYHNRSIRHSRKLLSLFLAQTQDVLQASNQRSLKVQALHSLGSLLIFAEKKRAAFKCWCQALDDIFRKPDVLHTWKEFGPSLTNVTNSHSPPGFKDYSEEFLSRVGIWGCLQGAVISAKIAQFIKSLNVEKKTDCCILSALLFQGLLRTTLPHPKAERCYAQYEITQLLPGIELFSDRYRADICSVIASLYYIIRELHFVRQNLIVLPLLALYQYFVSGICQDITRNLEARILKIEVLIDLRFFSEAFYEISQIFYGKNMPCPIPAGYKATGKMKIFQSFDSGKLLTSKENIQAIDELRNKGLPAVLVTIGQPHLLNKFNFVKAYFFLSVAATINCVPENKFKTVITNKSKPNLPNLEEIYSKDDGSSFYNLTKLKDEITLSMLKSMLLMEAEDRLNFLLSEVEQKTLSQCSAGELEIVVEARLQLAAVALQRHRAAYSAAIVFSTLTLLQDSKLFEKKVVQDDTENPVSPGTSVTENKDDSEFLDPISLNAREYFNIHLWLRCRLALVTAFVAQIHGIGIVKEDDMTDCLSLINEVCMEAKSAGDTELQAEFLTQAVILGLQEKHLKADIMTNLQDIIHLLEGNEFISPQSRLTLARSLVLLDDLTKAEKFKESPSSKTGKLNLLTRAHSILTEQMLAFGETIEFRSSNTKYANPLQPLKNIYLPHVMLLAKIKMRIGHTVAKQVYYKNKRKDPSKWLPALHLFDVALKLCRTTAVEEHEVEAEILFQKGKIERQILMEEKSPSFQLESLYEAIQLSLKNDQNSGLIRDSYLEMALLYFHLKKPKIKISGSPLTLKPPLRRSSSVKETSANKFEMYSSLAWIAIRAAAQVSEAVLAINLLIGKKNTRMHKVNQVALPNIPEFAALDLLSSYTDYLLDNYQVLFQTSCTFLYQNDDVCDSADGRKKTQTKVDITWILLLRYYIHLQRINNLSKLLASATPVSGISLPDDTLLTSLYNSELILRQKEVHFFLKKFLQLYSSSCIDEFPKELLCQLENPPLSEKDLRESSAKLYRDSSVQSILSFKPVSGSSCVDITPIEMVTQASNKELCFQWYIPPLDRPPKETEPMVLLLYAYNLKPLKISDVRHSTYNSTCVGSLWIPLNRVIAIHEKLSNLAQIAELSLPAAPEITSNENIYEVEVEEESVDNEMEDMIIQCCSEIASLFLNDKEPTPLSEVPFDISLPSIFNLERLFDLANGCILSGGSLFNWIVSIIP</sequence>
<organism>
    <name type="scientific">Homo sapiens</name>
    <name type="common">Human</name>
    <dbReference type="NCBI Taxonomy" id="9606"/>
    <lineage>
        <taxon>Eukaryota</taxon>
        <taxon>Metazoa</taxon>
        <taxon>Chordata</taxon>
        <taxon>Craniata</taxon>
        <taxon>Vertebrata</taxon>
        <taxon>Euteleostomi</taxon>
        <taxon>Mammalia</taxon>
        <taxon>Eutheria</taxon>
        <taxon>Euarchontoglires</taxon>
        <taxon>Primates</taxon>
        <taxon>Haplorrhini</taxon>
        <taxon>Catarrhini</taxon>
        <taxon>Hominidae</taxon>
        <taxon>Homo</taxon>
    </lineage>
</organism>
<feature type="chain" id="PRO_0000324606" description="Cilia- and flagella-associated protein 54">
    <location>
        <begin position="1"/>
        <end position="3096"/>
    </location>
</feature>
<feature type="region of interest" description="Disordered" evidence="3">
    <location>
        <begin position="1"/>
        <end position="46"/>
    </location>
</feature>
<feature type="region of interest" description="Disordered" evidence="3">
    <location>
        <begin position="1248"/>
        <end position="1267"/>
    </location>
</feature>
<feature type="compositionally biased region" description="Low complexity" evidence="3">
    <location>
        <begin position="1"/>
        <end position="45"/>
    </location>
</feature>
<feature type="splice variant" id="VSP_057365" description="In isoform 2.">
    <original>DNYQVLFQTSCT</original>
    <variation>GMFGCLHIMQKN</variation>
    <location>
        <begin position="2761"/>
        <end position="2772"/>
    </location>
</feature>
<feature type="splice variant" id="VSP_057366" description="In isoform 2.">
    <location>
        <begin position="2773"/>
        <end position="3096"/>
    </location>
</feature>
<feature type="sequence variant" id="VAR_056834" description="In dbSNP:rs3809197.">
    <original>P</original>
    <variation>S</variation>
    <location>
        <position position="11"/>
    </location>
</feature>
<feature type="sequence variant" id="VAR_056835" description="In dbSNP:rs2160501.">
    <original>T</original>
    <variation>A</variation>
    <location>
        <position position="558"/>
    </location>
</feature>
<feature type="sequence variant" id="VAR_056836" description="In dbSNP:rs2160502.">
    <original>L</original>
    <variation>F</variation>
    <location>
        <position position="562"/>
    </location>
</feature>
<feature type="sequence conflict" description="In Ref. 2; BAB71089." evidence="4" ref="2">
    <original>V</original>
    <variation>A</variation>
    <location>
        <position position="233"/>
    </location>
</feature>
<feature type="sequence conflict" description="In Ref. 2; BAC86439." evidence="4" ref="2">
    <original>L</original>
    <variation>F</variation>
    <location>
        <position position="1672"/>
    </location>
</feature>
<feature type="sequence conflict" description="In Ref. 2; BAC86439." evidence="4" ref="2">
    <original>L</original>
    <variation>P</variation>
    <location>
        <position position="2168"/>
    </location>
</feature>
<feature type="sequence conflict" description="In Ref. 2; BAC86439." evidence="4" ref="2">
    <original>E</original>
    <variation>K</variation>
    <location>
        <position position="2241"/>
    </location>
</feature>
<feature type="sequence conflict" description="In Ref. 2; BAC86439." evidence="4" ref="2">
    <original>S</original>
    <variation>N</variation>
    <location>
        <position position="2365"/>
    </location>
</feature>
<gene>
    <name evidence="5" type="primary">CFAP54</name>
    <name evidence="5" type="synonym">C12orf55</name>
    <name evidence="5" type="synonym">C12orf63</name>
</gene>
<reference key="1">
    <citation type="journal article" date="2006" name="Nature">
        <title>The finished DNA sequence of human chromosome 12.</title>
        <authorList>
            <person name="Scherer S.E."/>
            <person name="Muzny D.M."/>
            <person name="Buhay C.J."/>
            <person name="Chen R."/>
            <person name="Cree A."/>
            <person name="Ding Y."/>
            <person name="Dugan-Rocha S."/>
            <person name="Gill R."/>
            <person name="Gunaratne P."/>
            <person name="Harris R.A."/>
            <person name="Hawes A.C."/>
            <person name="Hernandez J."/>
            <person name="Hodgson A.V."/>
            <person name="Hume J."/>
            <person name="Jackson A."/>
            <person name="Khan Z.M."/>
            <person name="Kovar-Smith C."/>
            <person name="Lewis L.R."/>
            <person name="Lozado R.J."/>
            <person name="Metzker M.L."/>
            <person name="Milosavljevic A."/>
            <person name="Miner G.R."/>
            <person name="Montgomery K.T."/>
            <person name="Morgan M.B."/>
            <person name="Nazareth L.V."/>
            <person name="Scott G."/>
            <person name="Sodergren E."/>
            <person name="Song X.-Z."/>
            <person name="Steffen D."/>
            <person name="Lovering R.C."/>
            <person name="Wheeler D.A."/>
            <person name="Worley K.C."/>
            <person name="Yuan Y."/>
            <person name="Zhang Z."/>
            <person name="Adams C.Q."/>
            <person name="Ansari-Lari M.A."/>
            <person name="Ayele M."/>
            <person name="Brown M.J."/>
            <person name="Chen G."/>
            <person name="Chen Z."/>
            <person name="Clerc-Blankenburg K.P."/>
            <person name="Davis C."/>
            <person name="Delgado O."/>
            <person name="Dinh H.H."/>
            <person name="Draper H."/>
            <person name="Gonzalez-Garay M.L."/>
            <person name="Havlak P."/>
            <person name="Jackson L.R."/>
            <person name="Jacob L.S."/>
            <person name="Kelly S.H."/>
            <person name="Li L."/>
            <person name="Li Z."/>
            <person name="Liu J."/>
            <person name="Liu W."/>
            <person name="Lu J."/>
            <person name="Maheshwari M."/>
            <person name="Nguyen B.-V."/>
            <person name="Okwuonu G.O."/>
            <person name="Pasternak S."/>
            <person name="Perez L.M."/>
            <person name="Plopper F.J.H."/>
            <person name="Santibanez J."/>
            <person name="Shen H."/>
            <person name="Tabor P.E."/>
            <person name="Verduzco D."/>
            <person name="Waldron L."/>
            <person name="Wang Q."/>
            <person name="Williams G.A."/>
            <person name="Zhang J."/>
            <person name="Zhou J."/>
            <person name="Allen C.C."/>
            <person name="Amin A.G."/>
            <person name="Anyalebechi V."/>
            <person name="Bailey M."/>
            <person name="Barbaria J.A."/>
            <person name="Bimage K.E."/>
            <person name="Bryant N.P."/>
            <person name="Burch P.E."/>
            <person name="Burkett C.E."/>
            <person name="Burrell K.L."/>
            <person name="Calderon E."/>
            <person name="Cardenas V."/>
            <person name="Carter K."/>
            <person name="Casias K."/>
            <person name="Cavazos I."/>
            <person name="Cavazos S.R."/>
            <person name="Ceasar H."/>
            <person name="Chacko J."/>
            <person name="Chan S.N."/>
            <person name="Chavez D."/>
            <person name="Christopoulos C."/>
            <person name="Chu J."/>
            <person name="Cockrell R."/>
            <person name="Cox C.D."/>
            <person name="Dang M."/>
            <person name="Dathorne S.R."/>
            <person name="David R."/>
            <person name="Davis C.M."/>
            <person name="Davy-Carroll L."/>
            <person name="Deshazo D.R."/>
            <person name="Donlin J.E."/>
            <person name="D'Souza L."/>
            <person name="Eaves K.A."/>
            <person name="Egan A."/>
            <person name="Emery-Cohen A.J."/>
            <person name="Escotto M."/>
            <person name="Flagg N."/>
            <person name="Forbes L.D."/>
            <person name="Gabisi A.M."/>
            <person name="Garza M."/>
            <person name="Hamilton C."/>
            <person name="Henderson N."/>
            <person name="Hernandez O."/>
            <person name="Hines S."/>
            <person name="Hogues M.E."/>
            <person name="Huang M."/>
            <person name="Idlebird D.G."/>
            <person name="Johnson R."/>
            <person name="Jolivet A."/>
            <person name="Jones S."/>
            <person name="Kagan R."/>
            <person name="King L.M."/>
            <person name="Leal B."/>
            <person name="Lebow H."/>
            <person name="Lee S."/>
            <person name="LeVan J.M."/>
            <person name="Lewis L.C."/>
            <person name="London P."/>
            <person name="Lorensuhewa L.M."/>
            <person name="Loulseged H."/>
            <person name="Lovett D.A."/>
            <person name="Lucier A."/>
            <person name="Lucier R.L."/>
            <person name="Ma J."/>
            <person name="Madu R.C."/>
            <person name="Mapua P."/>
            <person name="Martindale A.D."/>
            <person name="Martinez E."/>
            <person name="Massey E."/>
            <person name="Mawhiney S."/>
            <person name="Meador M.G."/>
            <person name="Mendez S."/>
            <person name="Mercado C."/>
            <person name="Mercado I.C."/>
            <person name="Merritt C.E."/>
            <person name="Miner Z.L."/>
            <person name="Minja E."/>
            <person name="Mitchell T."/>
            <person name="Mohabbat F."/>
            <person name="Mohabbat K."/>
            <person name="Montgomery B."/>
            <person name="Moore N."/>
            <person name="Morris S."/>
            <person name="Munidasa M."/>
            <person name="Ngo R.N."/>
            <person name="Nguyen N.B."/>
            <person name="Nickerson E."/>
            <person name="Nwaokelemeh O.O."/>
            <person name="Nwokenkwo S."/>
            <person name="Obregon M."/>
            <person name="Oguh M."/>
            <person name="Oragunye N."/>
            <person name="Oviedo R.J."/>
            <person name="Parish B.J."/>
            <person name="Parker D.N."/>
            <person name="Parrish J."/>
            <person name="Parks K.L."/>
            <person name="Paul H.A."/>
            <person name="Payton B.A."/>
            <person name="Perez A."/>
            <person name="Perrin W."/>
            <person name="Pickens A."/>
            <person name="Primus E.L."/>
            <person name="Pu L.-L."/>
            <person name="Puazo M."/>
            <person name="Quiles M.M."/>
            <person name="Quiroz J.B."/>
            <person name="Rabata D."/>
            <person name="Reeves K."/>
            <person name="Ruiz S.J."/>
            <person name="Shao H."/>
            <person name="Sisson I."/>
            <person name="Sonaike T."/>
            <person name="Sorelle R.P."/>
            <person name="Sutton A.E."/>
            <person name="Svatek A.F."/>
            <person name="Svetz L.A."/>
            <person name="Tamerisa K.S."/>
            <person name="Taylor T.R."/>
            <person name="Teague B."/>
            <person name="Thomas N."/>
            <person name="Thorn R.D."/>
            <person name="Trejos Z.Y."/>
            <person name="Trevino B.K."/>
            <person name="Ukegbu O.N."/>
            <person name="Urban J.B."/>
            <person name="Vasquez L.I."/>
            <person name="Vera V.A."/>
            <person name="Villasana D.M."/>
            <person name="Wang L."/>
            <person name="Ward-Moore S."/>
            <person name="Warren J.T."/>
            <person name="Wei X."/>
            <person name="White F."/>
            <person name="Williamson A.L."/>
            <person name="Wleczyk R."/>
            <person name="Wooden H.S."/>
            <person name="Wooden S.H."/>
            <person name="Yen J."/>
            <person name="Yoon L."/>
            <person name="Yoon V."/>
            <person name="Zorrilla S.E."/>
            <person name="Nelson D."/>
            <person name="Kucherlapati R."/>
            <person name="Weinstock G."/>
            <person name="Gibbs R.A."/>
        </authorList>
    </citation>
    <scope>NUCLEOTIDE SEQUENCE [LARGE SCALE GENOMIC DNA]</scope>
</reference>
<reference key="2">
    <citation type="journal article" date="2004" name="Nat. Genet.">
        <title>Complete sequencing and characterization of 21,243 full-length human cDNAs.</title>
        <authorList>
            <person name="Ota T."/>
            <person name="Suzuki Y."/>
            <person name="Nishikawa T."/>
            <person name="Otsuki T."/>
            <person name="Sugiyama T."/>
            <person name="Irie R."/>
            <person name="Wakamatsu A."/>
            <person name="Hayashi K."/>
            <person name="Sato H."/>
            <person name="Nagai K."/>
            <person name="Kimura K."/>
            <person name="Makita H."/>
            <person name="Sekine M."/>
            <person name="Obayashi M."/>
            <person name="Nishi T."/>
            <person name="Shibahara T."/>
            <person name="Tanaka T."/>
            <person name="Ishii S."/>
            <person name="Yamamoto J."/>
            <person name="Saito K."/>
            <person name="Kawai Y."/>
            <person name="Isono Y."/>
            <person name="Nakamura Y."/>
            <person name="Nagahari K."/>
            <person name="Murakami K."/>
            <person name="Yasuda T."/>
            <person name="Iwayanagi T."/>
            <person name="Wagatsuma M."/>
            <person name="Shiratori A."/>
            <person name="Sudo H."/>
            <person name="Hosoiri T."/>
            <person name="Kaku Y."/>
            <person name="Kodaira H."/>
            <person name="Kondo H."/>
            <person name="Sugawara M."/>
            <person name="Takahashi M."/>
            <person name="Kanda K."/>
            <person name="Yokoi T."/>
            <person name="Furuya T."/>
            <person name="Kikkawa E."/>
            <person name="Omura Y."/>
            <person name="Abe K."/>
            <person name="Kamihara K."/>
            <person name="Katsuta N."/>
            <person name="Sato K."/>
            <person name="Tanikawa M."/>
            <person name="Yamazaki M."/>
            <person name="Ninomiya K."/>
            <person name="Ishibashi T."/>
            <person name="Yamashita H."/>
            <person name="Murakawa K."/>
            <person name="Fujimori K."/>
            <person name="Tanai H."/>
            <person name="Kimata M."/>
            <person name="Watanabe M."/>
            <person name="Hiraoka S."/>
            <person name="Chiba Y."/>
            <person name="Ishida S."/>
            <person name="Ono Y."/>
            <person name="Takiguchi S."/>
            <person name="Watanabe S."/>
            <person name="Yosida M."/>
            <person name="Hotuta T."/>
            <person name="Kusano J."/>
            <person name="Kanehori K."/>
            <person name="Takahashi-Fujii A."/>
            <person name="Hara H."/>
            <person name="Tanase T.-O."/>
            <person name="Nomura Y."/>
            <person name="Togiya S."/>
            <person name="Komai F."/>
            <person name="Hara R."/>
            <person name="Takeuchi K."/>
            <person name="Arita M."/>
            <person name="Imose N."/>
            <person name="Musashino K."/>
            <person name="Yuuki H."/>
            <person name="Oshima A."/>
            <person name="Sasaki N."/>
            <person name="Aotsuka S."/>
            <person name="Yoshikawa Y."/>
            <person name="Matsunawa H."/>
            <person name="Ichihara T."/>
            <person name="Shiohata N."/>
            <person name="Sano S."/>
            <person name="Moriya S."/>
            <person name="Momiyama H."/>
            <person name="Satoh N."/>
            <person name="Takami S."/>
            <person name="Terashima Y."/>
            <person name="Suzuki O."/>
            <person name="Nakagawa S."/>
            <person name="Senoh A."/>
            <person name="Mizoguchi H."/>
            <person name="Goto Y."/>
            <person name="Shimizu F."/>
            <person name="Wakebe H."/>
            <person name="Hishigaki H."/>
            <person name="Watanabe T."/>
            <person name="Sugiyama A."/>
            <person name="Takemoto M."/>
            <person name="Kawakami B."/>
            <person name="Yamazaki M."/>
            <person name="Watanabe K."/>
            <person name="Kumagai A."/>
            <person name="Itakura S."/>
            <person name="Fukuzumi Y."/>
            <person name="Fujimori Y."/>
            <person name="Komiyama M."/>
            <person name="Tashiro H."/>
            <person name="Tanigami A."/>
            <person name="Fujiwara T."/>
            <person name="Ono T."/>
            <person name="Yamada K."/>
            <person name="Fujii Y."/>
            <person name="Ozaki K."/>
            <person name="Hirao M."/>
            <person name="Ohmori Y."/>
            <person name="Kawabata A."/>
            <person name="Hikiji T."/>
            <person name="Kobatake N."/>
            <person name="Inagaki H."/>
            <person name="Ikema Y."/>
            <person name="Okamoto S."/>
            <person name="Okitani R."/>
            <person name="Kawakami T."/>
            <person name="Noguchi S."/>
            <person name="Itoh T."/>
            <person name="Shigeta K."/>
            <person name="Senba T."/>
            <person name="Matsumura K."/>
            <person name="Nakajima Y."/>
            <person name="Mizuno T."/>
            <person name="Morinaga M."/>
            <person name="Sasaki M."/>
            <person name="Togashi T."/>
            <person name="Oyama M."/>
            <person name="Hata H."/>
            <person name="Watanabe M."/>
            <person name="Komatsu T."/>
            <person name="Mizushima-Sugano J."/>
            <person name="Satoh T."/>
            <person name="Shirai Y."/>
            <person name="Takahashi Y."/>
            <person name="Nakagawa K."/>
            <person name="Okumura K."/>
            <person name="Nagase T."/>
            <person name="Nomura N."/>
            <person name="Kikuchi H."/>
            <person name="Masuho Y."/>
            <person name="Yamashita R."/>
            <person name="Nakai K."/>
            <person name="Yada T."/>
            <person name="Nakamura Y."/>
            <person name="Ohara O."/>
            <person name="Isogai T."/>
            <person name="Sugano S."/>
        </authorList>
    </citation>
    <scope>PARTIAL NUCLEOTIDE SEQUENCE [LARGE SCALE MRNA] (ISOFORM 2)</scope>
    <source>
        <tissue>Teratocarcinoma</tissue>
        <tissue>Testis</tissue>
    </source>
</reference>
<protein>
    <recommendedName>
        <fullName evidence="4">Cilia- and flagella-associated protein 54</fullName>
    </recommendedName>
</protein>
<proteinExistence type="evidence at protein level"/>
<accession>Q96N23</accession>
<accession>E9PJL5</accession>
<accession>Q6ZTY8</accession>
<comment type="function">
    <text evidence="2">Required for assembly and function of cilia and flagella.</text>
</comment>
<comment type="subcellular location">
    <subcellularLocation>
        <location evidence="1">Cytoplasm</location>
        <location evidence="1">Cytoskeleton</location>
        <location evidence="1">Cilium axoneme</location>
    </subcellularLocation>
</comment>
<comment type="alternative products">
    <event type="alternative splicing"/>
    <isoform>
        <id>Q96N23-1</id>
        <name>1</name>
        <sequence type="displayed"/>
    </isoform>
    <isoform>
        <id>Q96N23-2</id>
        <name>2</name>
        <sequence type="described" ref="VSP_057365 VSP_057366"/>
    </isoform>
</comment>
<comment type="miscellaneous">
    <molecule>Isoform 1</molecule>
    <text>Gene prediction based on partial mRNA data.</text>
</comment>
<comment type="miscellaneous">
    <molecule>Isoform 2</molecule>
    <text evidence="4">Incomplete sequence.</text>
</comment>
<comment type="similarity">
    <text evidence="4">Belongs to the CFAP54 family.</text>
</comment>
<comment type="sequence caution" evidence="4">
    <conflict type="erroneous initiation">
        <sequence resource="EMBL-CDS" id="BAC86439"/>
    </conflict>
    <text>Truncated N-terminus.</text>
</comment>
<keyword id="KW-0025">Alternative splicing</keyword>
<keyword id="KW-0966">Cell projection</keyword>
<keyword id="KW-0969">Cilium</keyword>
<keyword id="KW-0970">Cilium biogenesis/degradation</keyword>
<keyword id="KW-0963">Cytoplasm</keyword>
<keyword id="KW-0206">Cytoskeleton</keyword>
<keyword id="KW-0221">Differentiation</keyword>
<keyword id="KW-1267">Proteomics identification</keyword>
<keyword id="KW-1185">Reference proteome</keyword>
<keyword id="KW-0744">Spermatogenesis</keyword>